<comment type="subcellular location">
    <subcellularLocation>
        <location evidence="2">Cell membrane</location>
        <topology evidence="2">Multi-pass membrane protein</topology>
    </subcellularLocation>
</comment>
<feature type="chain" id="PRO_0000106933" description="Uncharacterized protein MJ0565">
    <location>
        <begin position="1"/>
        <end position="147"/>
    </location>
</feature>
<feature type="transmembrane region" description="Helical" evidence="1">
    <location>
        <begin position="13"/>
        <end position="33"/>
    </location>
</feature>
<feature type="transmembrane region" description="Helical" evidence="1">
    <location>
        <begin position="45"/>
        <end position="65"/>
    </location>
</feature>
<feature type="transmembrane region" description="Helical" evidence="1">
    <location>
        <begin position="80"/>
        <end position="100"/>
    </location>
</feature>
<feature type="transmembrane region" description="Helical" evidence="1">
    <location>
        <begin position="116"/>
        <end position="136"/>
    </location>
</feature>
<gene>
    <name type="ordered locus">MJ0565</name>
</gene>
<organism>
    <name type="scientific">Methanocaldococcus jannaschii (strain ATCC 43067 / DSM 2661 / JAL-1 / JCM 10045 / NBRC 100440)</name>
    <name type="common">Methanococcus jannaschii</name>
    <dbReference type="NCBI Taxonomy" id="243232"/>
    <lineage>
        <taxon>Archaea</taxon>
        <taxon>Methanobacteriati</taxon>
        <taxon>Methanobacteriota</taxon>
        <taxon>Methanomada group</taxon>
        <taxon>Methanococci</taxon>
        <taxon>Methanococcales</taxon>
        <taxon>Methanocaldococcaceae</taxon>
        <taxon>Methanocaldococcus</taxon>
    </lineage>
</organism>
<sequence>MDIKNMRNVIVSLSLVFGLLFTVSGIIEIIIGLYSILGFKIELPLFVGDVFGGLALLAVGIAYFLGVKKAVDRDIKAVSYLFTASIIGLGIGVIAFLILISDAIGFLLGFEDWADWGFFNDLTVYLVLGMLAIIPYRIAKIISSSTT</sequence>
<reference key="1">
    <citation type="journal article" date="1996" name="Science">
        <title>Complete genome sequence of the methanogenic archaeon, Methanococcus jannaschii.</title>
        <authorList>
            <person name="Bult C.J."/>
            <person name="White O."/>
            <person name="Olsen G.J."/>
            <person name="Zhou L."/>
            <person name="Fleischmann R.D."/>
            <person name="Sutton G.G."/>
            <person name="Blake J.A."/>
            <person name="FitzGerald L.M."/>
            <person name="Clayton R.A."/>
            <person name="Gocayne J.D."/>
            <person name="Kerlavage A.R."/>
            <person name="Dougherty B.A."/>
            <person name="Tomb J.-F."/>
            <person name="Adams M.D."/>
            <person name="Reich C.I."/>
            <person name="Overbeek R."/>
            <person name="Kirkness E.F."/>
            <person name="Weinstock K.G."/>
            <person name="Merrick J.M."/>
            <person name="Glodek A."/>
            <person name="Scott J.L."/>
            <person name="Geoghagen N.S.M."/>
            <person name="Weidman J.F."/>
            <person name="Fuhrmann J.L."/>
            <person name="Nguyen D."/>
            <person name="Utterback T.R."/>
            <person name="Kelley J.M."/>
            <person name="Peterson J.D."/>
            <person name="Sadow P.W."/>
            <person name="Hanna M.C."/>
            <person name="Cotton M.D."/>
            <person name="Roberts K.M."/>
            <person name="Hurst M.A."/>
            <person name="Kaine B.P."/>
            <person name="Borodovsky M."/>
            <person name="Klenk H.-P."/>
            <person name="Fraser C.M."/>
            <person name="Smith H.O."/>
            <person name="Woese C.R."/>
            <person name="Venter J.C."/>
        </authorList>
    </citation>
    <scope>NUCLEOTIDE SEQUENCE [LARGE SCALE GENOMIC DNA]</scope>
    <source>
        <strain>ATCC 43067 / DSM 2661 / JAL-1 / JCM 10045 / NBRC 100440</strain>
    </source>
</reference>
<evidence type="ECO:0000255" key="1"/>
<evidence type="ECO:0000305" key="2"/>
<keyword id="KW-1003">Cell membrane</keyword>
<keyword id="KW-0472">Membrane</keyword>
<keyword id="KW-1185">Reference proteome</keyword>
<keyword id="KW-0812">Transmembrane</keyword>
<keyword id="KW-1133">Transmembrane helix</keyword>
<accession>Q57985</accession>
<proteinExistence type="predicted"/>
<dbReference type="EMBL" id="L77117">
    <property type="protein sequence ID" value="AAB98561.1"/>
    <property type="molecule type" value="Genomic_DNA"/>
</dbReference>
<dbReference type="PIR" id="E64370">
    <property type="entry name" value="E64370"/>
</dbReference>
<dbReference type="RefSeq" id="WP_010870069.1">
    <property type="nucleotide sequence ID" value="NC_000909.1"/>
</dbReference>
<dbReference type="STRING" id="243232.MJ_0565"/>
<dbReference type="PaxDb" id="243232-MJ_0565"/>
<dbReference type="EnsemblBacteria" id="AAB98561">
    <property type="protein sequence ID" value="AAB98561"/>
    <property type="gene ID" value="MJ_0565"/>
</dbReference>
<dbReference type="GeneID" id="1451430"/>
<dbReference type="KEGG" id="mja:MJ_0565"/>
<dbReference type="eggNOG" id="arCOG04938">
    <property type="taxonomic scope" value="Archaea"/>
</dbReference>
<dbReference type="HOGENOM" id="CLU_143944_0_0_2"/>
<dbReference type="InParanoid" id="Q57985"/>
<dbReference type="OrthoDB" id="66025at2157"/>
<dbReference type="Proteomes" id="UP000000805">
    <property type="component" value="Chromosome"/>
</dbReference>
<dbReference type="GO" id="GO:0005886">
    <property type="term" value="C:plasma membrane"/>
    <property type="evidence" value="ECO:0007669"/>
    <property type="project" value="UniProtKB-SubCell"/>
</dbReference>
<name>Y565_METJA</name>
<protein>
    <recommendedName>
        <fullName>Uncharacterized protein MJ0565</fullName>
    </recommendedName>
</protein>